<feature type="chain" id="PRO_0000252943" description="Fluoride-specific ion channel FluC 1">
    <location>
        <begin position="1"/>
        <end position="121"/>
    </location>
</feature>
<feature type="transmembrane region" description="Helical" evidence="1">
    <location>
        <begin position="3"/>
        <end position="23"/>
    </location>
</feature>
<feature type="transmembrane region" description="Helical" evidence="1">
    <location>
        <begin position="35"/>
        <end position="55"/>
    </location>
</feature>
<feature type="transmembrane region" description="Helical" evidence="1">
    <location>
        <begin position="64"/>
        <end position="84"/>
    </location>
</feature>
<feature type="transmembrane region" description="Helical" evidence="1">
    <location>
        <begin position="92"/>
        <end position="112"/>
    </location>
</feature>
<feature type="binding site" evidence="1">
    <location>
        <position position="71"/>
    </location>
    <ligand>
        <name>Na(+)</name>
        <dbReference type="ChEBI" id="CHEBI:29101"/>
        <note>structural</note>
    </ligand>
</feature>
<feature type="binding site" evidence="1">
    <location>
        <position position="74"/>
    </location>
    <ligand>
        <name>Na(+)</name>
        <dbReference type="ChEBI" id="CHEBI:29101"/>
        <note>structural</note>
    </ligand>
</feature>
<dbReference type="EMBL" id="CP000253">
    <property type="protein sequence ID" value="ABD30966.1"/>
    <property type="molecule type" value="Genomic_DNA"/>
</dbReference>
<dbReference type="RefSeq" id="YP_500404.1">
    <property type="nucleotide sequence ID" value="NC_007795.1"/>
</dbReference>
<dbReference type="SMR" id="Q2FXE6"/>
<dbReference type="STRING" id="93061.SAOUHSC_01903"/>
<dbReference type="PaxDb" id="1280-SAXN108_1813"/>
<dbReference type="GeneID" id="3920850"/>
<dbReference type="KEGG" id="sao:SAOUHSC_01903"/>
<dbReference type="PATRIC" id="fig|93061.5.peg.1732"/>
<dbReference type="eggNOG" id="COG0239">
    <property type="taxonomic scope" value="Bacteria"/>
</dbReference>
<dbReference type="HOGENOM" id="CLU_114342_3_2_9"/>
<dbReference type="OrthoDB" id="9799631at2"/>
<dbReference type="PRO" id="PR:Q2FXE6"/>
<dbReference type="Proteomes" id="UP000008816">
    <property type="component" value="Chromosome"/>
</dbReference>
<dbReference type="GO" id="GO:0005886">
    <property type="term" value="C:plasma membrane"/>
    <property type="evidence" value="ECO:0000318"/>
    <property type="project" value="GO_Central"/>
</dbReference>
<dbReference type="GO" id="GO:0062054">
    <property type="term" value="F:fluoride channel activity"/>
    <property type="evidence" value="ECO:0007669"/>
    <property type="project" value="UniProtKB-UniRule"/>
</dbReference>
<dbReference type="GO" id="GO:1903425">
    <property type="term" value="F:fluoride transmembrane transporter activity"/>
    <property type="evidence" value="ECO:0000318"/>
    <property type="project" value="GO_Central"/>
</dbReference>
<dbReference type="GO" id="GO:0046872">
    <property type="term" value="F:metal ion binding"/>
    <property type="evidence" value="ECO:0007669"/>
    <property type="project" value="UniProtKB-KW"/>
</dbReference>
<dbReference type="GO" id="GO:0140114">
    <property type="term" value="P:cellular detoxification of fluoride"/>
    <property type="evidence" value="ECO:0007669"/>
    <property type="project" value="UniProtKB-UniRule"/>
</dbReference>
<dbReference type="GO" id="GO:1903424">
    <property type="term" value="P:fluoride transmembrane transport"/>
    <property type="evidence" value="ECO:0000318"/>
    <property type="project" value="GO_Central"/>
</dbReference>
<dbReference type="HAMAP" id="MF_00454">
    <property type="entry name" value="FluC"/>
    <property type="match status" value="1"/>
</dbReference>
<dbReference type="InterPro" id="IPR003691">
    <property type="entry name" value="FluC"/>
</dbReference>
<dbReference type="NCBIfam" id="TIGR00494">
    <property type="entry name" value="crcB"/>
    <property type="match status" value="1"/>
</dbReference>
<dbReference type="NCBIfam" id="NF010797">
    <property type="entry name" value="PRK14201.1"/>
    <property type="match status" value="1"/>
</dbReference>
<dbReference type="PANTHER" id="PTHR28259">
    <property type="entry name" value="FLUORIDE EXPORT PROTEIN 1-RELATED"/>
    <property type="match status" value="1"/>
</dbReference>
<dbReference type="PANTHER" id="PTHR28259:SF16">
    <property type="entry name" value="FLUORIDE-SPECIFIC ION CHANNEL FLUC 2"/>
    <property type="match status" value="1"/>
</dbReference>
<dbReference type="Pfam" id="PF02537">
    <property type="entry name" value="CRCB"/>
    <property type="match status" value="1"/>
</dbReference>
<organism>
    <name type="scientific">Staphylococcus aureus (strain NCTC 8325 / PS 47)</name>
    <dbReference type="NCBI Taxonomy" id="93061"/>
    <lineage>
        <taxon>Bacteria</taxon>
        <taxon>Bacillati</taxon>
        <taxon>Bacillota</taxon>
        <taxon>Bacilli</taxon>
        <taxon>Bacillales</taxon>
        <taxon>Staphylococcaceae</taxon>
        <taxon>Staphylococcus</taxon>
    </lineage>
</organism>
<accession>Q2FXE6</accession>
<protein>
    <recommendedName>
        <fullName evidence="1">Fluoride-specific ion channel FluC 1</fullName>
    </recommendedName>
</protein>
<reference key="1">
    <citation type="book" date="2006" name="Gram positive pathogens, 2nd edition">
        <title>The Staphylococcus aureus NCTC 8325 genome.</title>
        <editorList>
            <person name="Fischetti V."/>
            <person name="Novick R."/>
            <person name="Ferretti J."/>
            <person name="Portnoy D."/>
            <person name="Rood J."/>
        </editorList>
        <authorList>
            <person name="Gillaspy A.F."/>
            <person name="Worrell V."/>
            <person name="Orvis J."/>
            <person name="Roe B.A."/>
            <person name="Dyer D.W."/>
            <person name="Iandolo J.J."/>
        </authorList>
    </citation>
    <scope>NUCLEOTIDE SEQUENCE [LARGE SCALE GENOMIC DNA]</scope>
    <source>
        <strain>NCTC 8325 / PS 47</strain>
    </source>
</reference>
<sequence length="121" mass="13096">MQYVYIFIGGALGALLRYLISFLNTDGGFPIGTLIANLTGAFVMGLLTALTIAFFSNHPTLKKAITTGFLGALTTFSTFQLELIHMFDHQQFITLLLYAVTSYVFGILLCYVGIKLGGGLS</sequence>
<keyword id="KW-1003">Cell membrane</keyword>
<keyword id="KW-0407">Ion channel</keyword>
<keyword id="KW-0406">Ion transport</keyword>
<keyword id="KW-0472">Membrane</keyword>
<keyword id="KW-0479">Metal-binding</keyword>
<keyword id="KW-1185">Reference proteome</keyword>
<keyword id="KW-0915">Sodium</keyword>
<keyword id="KW-0812">Transmembrane</keyword>
<keyword id="KW-1133">Transmembrane helix</keyword>
<keyword id="KW-0813">Transport</keyword>
<gene>
    <name evidence="1" type="primary">fluC1</name>
    <name evidence="1" type="synonym">crcB1</name>
    <name type="ordered locus">SAOUHSC_01903</name>
</gene>
<proteinExistence type="inferred from homology"/>
<evidence type="ECO:0000255" key="1">
    <source>
        <dbReference type="HAMAP-Rule" id="MF_00454"/>
    </source>
</evidence>
<comment type="function">
    <text evidence="1">Fluoride-specific ion channel. Important for reducing fluoride concentration in the cell, thus reducing its toxicity.</text>
</comment>
<comment type="catalytic activity">
    <reaction evidence="1">
        <text>fluoride(in) = fluoride(out)</text>
        <dbReference type="Rhea" id="RHEA:76159"/>
        <dbReference type="ChEBI" id="CHEBI:17051"/>
    </reaction>
    <physiologicalReaction direction="left-to-right" evidence="1">
        <dbReference type="Rhea" id="RHEA:76160"/>
    </physiologicalReaction>
</comment>
<comment type="activity regulation">
    <text evidence="1">Na(+) is not transported, but it plays an essential structural role and its presence is essential for fluoride channel function.</text>
</comment>
<comment type="subcellular location">
    <subcellularLocation>
        <location evidence="1">Cell membrane</location>
        <topology evidence="1">Multi-pass membrane protein</topology>
    </subcellularLocation>
</comment>
<comment type="similarity">
    <text evidence="1">Belongs to the fluoride channel Fluc/FEX (TC 1.A.43) family.</text>
</comment>
<name>FLUC1_STAA8</name>